<evidence type="ECO:0000255" key="1">
    <source>
        <dbReference type="HAMAP-Rule" id="MF_01306"/>
    </source>
</evidence>
<evidence type="ECO:0000256" key="2">
    <source>
        <dbReference type="SAM" id="MobiDB-lite"/>
    </source>
</evidence>
<evidence type="ECO:0000305" key="3"/>
<proteinExistence type="inferred from homology"/>
<reference key="1">
    <citation type="journal article" date="2006" name="Proc. Natl. Acad. Sci. U.S.A.">
        <title>The complete genome sequence of a chronic atrophic gastritis Helicobacter pylori strain: evolution during disease progression.</title>
        <authorList>
            <person name="Oh J.D."/>
            <person name="Kling-Baeckhed H."/>
            <person name="Giannakis M."/>
            <person name="Xu J."/>
            <person name="Fulton R.S."/>
            <person name="Fulton L.A."/>
            <person name="Cordum H.S."/>
            <person name="Wang C."/>
            <person name="Elliott G."/>
            <person name="Edwards J."/>
            <person name="Mardis E.R."/>
            <person name="Engstrand L.G."/>
            <person name="Gordon J.I."/>
        </authorList>
    </citation>
    <scope>NUCLEOTIDE SEQUENCE [LARGE SCALE GENOMIC DNA]</scope>
    <source>
        <strain>HPAG1</strain>
    </source>
</reference>
<organism>
    <name type="scientific">Helicobacter pylori (strain HPAG1)</name>
    <dbReference type="NCBI Taxonomy" id="357544"/>
    <lineage>
        <taxon>Bacteria</taxon>
        <taxon>Pseudomonadati</taxon>
        <taxon>Campylobacterota</taxon>
        <taxon>Epsilonproteobacteria</taxon>
        <taxon>Campylobacterales</taxon>
        <taxon>Helicobacteraceae</taxon>
        <taxon>Helicobacter</taxon>
    </lineage>
</organism>
<protein>
    <recommendedName>
        <fullName evidence="1">Small ribosomal subunit protein uS4</fullName>
    </recommendedName>
    <alternativeName>
        <fullName evidence="3">30S ribosomal protein S4</fullName>
    </alternativeName>
</protein>
<feature type="chain" id="PRO_0000293292" description="Small ribosomal subunit protein uS4">
    <location>
        <begin position="1"/>
        <end position="208"/>
    </location>
</feature>
<feature type="domain" description="S4 RNA-binding" evidence="1">
    <location>
        <begin position="98"/>
        <end position="156"/>
    </location>
</feature>
<feature type="region of interest" description="Disordered" evidence="2">
    <location>
        <begin position="31"/>
        <end position="51"/>
    </location>
</feature>
<keyword id="KW-0687">Ribonucleoprotein</keyword>
<keyword id="KW-0689">Ribosomal protein</keyword>
<keyword id="KW-0694">RNA-binding</keyword>
<keyword id="KW-0699">rRNA-binding</keyword>
<dbReference type="EMBL" id="CP000241">
    <property type="protein sequence ID" value="ABF85306.1"/>
    <property type="molecule type" value="Genomic_DNA"/>
</dbReference>
<dbReference type="RefSeq" id="WP_000135248.1">
    <property type="nucleotide sequence ID" value="NC_008086.1"/>
</dbReference>
<dbReference type="SMR" id="Q1CRW6"/>
<dbReference type="KEGG" id="hpa:HPAG1_1239"/>
<dbReference type="HOGENOM" id="CLU_092403_0_2_7"/>
<dbReference type="GO" id="GO:0015935">
    <property type="term" value="C:small ribosomal subunit"/>
    <property type="evidence" value="ECO:0007669"/>
    <property type="project" value="InterPro"/>
</dbReference>
<dbReference type="GO" id="GO:0019843">
    <property type="term" value="F:rRNA binding"/>
    <property type="evidence" value="ECO:0007669"/>
    <property type="project" value="UniProtKB-UniRule"/>
</dbReference>
<dbReference type="GO" id="GO:0003735">
    <property type="term" value="F:structural constituent of ribosome"/>
    <property type="evidence" value="ECO:0007669"/>
    <property type="project" value="InterPro"/>
</dbReference>
<dbReference type="GO" id="GO:0042274">
    <property type="term" value="P:ribosomal small subunit biogenesis"/>
    <property type="evidence" value="ECO:0007669"/>
    <property type="project" value="TreeGrafter"/>
</dbReference>
<dbReference type="GO" id="GO:0006412">
    <property type="term" value="P:translation"/>
    <property type="evidence" value="ECO:0007669"/>
    <property type="project" value="UniProtKB-UniRule"/>
</dbReference>
<dbReference type="CDD" id="cd00165">
    <property type="entry name" value="S4"/>
    <property type="match status" value="1"/>
</dbReference>
<dbReference type="FunFam" id="1.10.1050.10:FF:000001">
    <property type="entry name" value="30S ribosomal protein S4"/>
    <property type="match status" value="1"/>
</dbReference>
<dbReference type="FunFam" id="3.10.290.10:FF:000001">
    <property type="entry name" value="30S ribosomal protein S4"/>
    <property type="match status" value="1"/>
</dbReference>
<dbReference type="Gene3D" id="1.10.1050.10">
    <property type="entry name" value="Ribosomal Protein S4 Delta 41, Chain A, domain 1"/>
    <property type="match status" value="1"/>
</dbReference>
<dbReference type="Gene3D" id="3.10.290.10">
    <property type="entry name" value="RNA-binding S4 domain"/>
    <property type="match status" value="1"/>
</dbReference>
<dbReference type="HAMAP" id="MF_01306_B">
    <property type="entry name" value="Ribosomal_uS4_B"/>
    <property type="match status" value="1"/>
</dbReference>
<dbReference type="InterPro" id="IPR022801">
    <property type="entry name" value="Ribosomal_uS4"/>
</dbReference>
<dbReference type="InterPro" id="IPR005709">
    <property type="entry name" value="Ribosomal_uS4_bac-type"/>
</dbReference>
<dbReference type="InterPro" id="IPR018079">
    <property type="entry name" value="Ribosomal_uS4_CS"/>
</dbReference>
<dbReference type="InterPro" id="IPR001912">
    <property type="entry name" value="Ribosomal_uS4_N"/>
</dbReference>
<dbReference type="InterPro" id="IPR002942">
    <property type="entry name" value="S4_RNA-bd"/>
</dbReference>
<dbReference type="InterPro" id="IPR036986">
    <property type="entry name" value="S4_RNA-bd_sf"/>
</dbReference>
<dbReference type="NCBIfam" id="NF003717">
    <property type="entry name" value="PRK05327.1"/>
    <property type="match status" value="1"/>
</dbReference>
<dbReference type="NCBIfam" id="TIGR01017">
    <property type="entry name" value="rpsD_bact"/>
    <property type="match status" value="1"/>
</dbReference>
<dbReference type="PANTHER" id="PTHR11831">
    <property type="entry name" value="30S 40S RIBOSOMAL PROTEIN"/>
    <property type="match status" value="1"/>
</dbReference>
<dbReference type="PANTHER" id="PTHR11831:SF4">
    <property type="entry name" value="SMALL RIBOSOMAL SUBUNIT PROTEIN US4M"/>
    <property type="match status" value="1"/>
</dbReference>
<dbReference type="Pfam" id="PF00163">
    <property type="entry name" value="Ribosomal_S4"/>
    <property type="match status" value="1"/>
</dbReference>
<dbReference type="Pfam" id="PF01479">
    <property type="entry name" value="S4"/>
    <property type="match status" value="1"/>
</dbReference>
<dbReference type="SMART" id="SM01390">
    <property type="entry name" value="Ribosomal_S4"/>
    <property type="match status" value="1"/>
</dbReference>
<dbReference type="SMART" id="SM00363">
    <property type="entry name" value="S4"/>
    <property type="match status" value="1"/>
</dbReference>
<dbReference type="SUPFAM" id="SSF55174">
    <property type="entry name" value="Alpha-L RNA-binding motif"/>
    <property type="match status" value="1"/>
</dbReference>
<dbReference type="PROSITE" id="PS00632">
    <property type="entry name" value="RIBOSOMAL_S4"/>
    <property type="match status" value="1"/>
</dbReference>
<dbReference type="PROSITE" id="PS50889">
    <property type="entry name" value="S4"/>
    <property type="match status" value="1"/>
</dbReference>
<name>RS4_HELPH</name>
<accession>Q1CRW6</accession>
<sequence>MARYRGAVERLERRFGVSLALKGERRLSGKSALDKRAYGPGQHGQRRAKTSDYGLQLKEKQKAKMMYGISEKQFRSIFVEANRLDGNTGENLIRLIERRLDNVVYRMGFATTRSSARQLVTHGHVLVDGKRLDIPSYFVRSGQKIEIKEKTKSNPQVVRATELTAQTGIVPWIDVEKDKKYGIFTRYPEREEVVVPIEERLIVELYSK</sequence>
<gene>
    <name evidence="1" type="primary">rpsD</name>
    <name type="ordered locus">HPAG1_1239</name>
</gene>
<comment type="function">
    <text evidence="1">One of the primary rRNA binding proteins, it binds directly to 16S rRNA where it nucleates assembly of the body of the 30S subunit.</text>
</comment>
<comment type="function">
    <text evidence="1">With S5 and S12 plays an important role in translational accuracy.</text>
</comment>
<comment type="subunit">
    <text evidence="1">Part of the 30S ribosomal subunit. Contacts protein S5. The interaction surface between S4 and S5 is involved in control of translational fidelity.</text>
</comment>
<comment type="similarity">
    <text evidence="1">Belongs to the universal ribosomal protein uS4 family.</text>
</comment>